<organism>
    <name type="scientific">Meiacanthus atrodorsalis</name>
    <name type="common">Forktail blenny</name>
    <name type="synonym">Petroscirtes atrodorsalis</name>
    <dbReference type="NCBI Taxonomy" id="1405650"/>
    <lineage>
        <taxon>Eukaryota</taxon>
        <taxon>Metazoa</taxon>
        <taxon>Chordata</taxon>
        <taxon>Craniata</taxon>
        <taxon>Vertebrata</taxon>
        <taxon>Euteleostomi</taxon>
        <taxon>Actinopterygii</taxon>
        <taxon>Neopterygii</taxon>
        <taxon>Teleostei</taxon>
        <taxon>Neoteleostei</taxon>
        <taxon>Acanthomorphata</taxon>
        <taxon>Ovalentaria</taxon>
        <taxon>Blenniimorphae</taxon>
        <taxon>Blenniiformes</taxon>
        <taxon>Blennioidei</taxon>
        <taxon>Blenniidae</taxon>
        <taxon>Blenniinae</taxon>
        <taxon>Meiacanthus</taxon>
    </lineage>
</organism>
<dbReference type="GO" id="GO:0005615">
    <property type="term" value="C:extracellular space"/>
    <property type="evidence" value="ECO:0007669"/>
    <property type="project" value="TreeGrafter"/>
</dbReference>
<dbReference type="GO" id="GO:0005184">
    <property type="term" value="F:neuropeptide hormone activity"/>
    <property type="evidence" value="ECO:0007669"/>
    <property type="project" value="TreeGrafter"/>
</dbReference>
<dbReference type="GO" id="GO:0031841">
    <property type="term" value="F:neuropeptide Y receptor binding"/>
    <property type="evidence" value="ECO:0007669"/>
    <property type="project" value="TreeGrafter"/>
</dbReference>
<dbReference type="GO" id="GO:0007631">
    <property type="term" value="P:feeding behavior"/>
    <property type="evidence" value="ECO:0007669"/>
    <property type="project" value="TreeGrafter"/>
</dbReference>
<dbReference type="GO" id="GO:0007218">
    <property type="term" value="P:neuropeptide signaling pathway"/>
    <property type="evidence" value="ECO:0007669"/>
    <property type="project" value="UniProtKB-KW"/>
</dbReference>
<dbReference type="GO" id="GO:0008217">
    <property type="term" value="P:regulation of blood pressure"/>
    <property type="evidence" value="ECO:0007669"/>
    <property type="project" value="UniProtKB-KW"/>
</dbReference>
<dbReference type="CDD" id="cd00126">
    <property type="entry name" value="PAH"/>
    <property type="match status" value="1"/>
</dbReference>
<dbReference type="Gene3D" id="6.10.250.900">
    <property type="match status" value="1"/>
</dbReference>
<dbReference type="InterPro" id="IPR001955">
    <property type="entry name" value="Pancreatic_hormone-like"/>
</dbReference>
<dbReference type="InterPro" id="IPR020392">
    <property type="entry name" value="Pancreatic_hormone-like_CS"/>
</dbReference>
<dbReference type="PANTHER" id="PTHR10533">
    <property type="entry name" value="NEUROPEPTIDE Y/PANCREATIC HORMONE/PEPTIDE YY"/>
    <property type="match status" value="1"/>
</dbReference>
<dbReference type="PANTHER" id="PTHR10533:SF5">
    <property type="entry name" value="PRO-NEUROPEPTIDE Y"/>
    <property type="match status" value="1"/>
</dbReference>
<dbReference type="Pfam" id="PF00159">
    <property type="entry name" value="Hormone_3"/>
    <property type="match status" value="1"/>
</dbReference>
<dbReference type="PRINTS" id="PR00278">
    <property type="entry name" value="PANCHORMONE"/>
</dbReference>
<dbReference type="SMART" id="SM00309">
    <property type="entry name" value="PAH"/>
    <property type="match status" value="1"/>
</dbReference>
<dbReference type="PROSITE" id="PS00265">
    <property type="entry name" value="PANCREATIC_HORMONE_1"/>
    <property type="match status" value="1"/>
</dbReference>
<dbReference type="PROSITE" id="PS50276">
    <property type="entry name" value="PANCREATIC_HORMONE_2"/>
    <property type="match status" value="1"/>
</dbReference>
<comment type="function">
    <text evidence="6">Neuropeptides Y are crucial for the regulation of cardiovascular processes such as blood pressure. Venom of Meiacanthus fangblennies shows a potent hypotensive bioactivity (tested on M.grammistes), but has no effect on the heart rate. Therefore, finding a neuropeptide Y sequence in M.atrodorsalis venom suggests that this protein act as a hypotensive agent (Probable).</text>
</comment>
<comment type="subcellular location">
    <subcellularLocation>
        <location evidence="6">Secreted</location>
    </subcellularLocation>
</comment>
<comment type="tissue specificity">
    <text evidence="3">Expressed by the venom gland. Heavily expressed in the venom gland transcriptome.</text>
</comment>
<comment type="miscellaneous">
    <text evidence="3">In contrast to venom of most venomous species, the venom of Meiacanthus fangblennies is relatively painless, when tested on mammals. While species-specific nociceptive effects are possible, this defensive venom is surprisingly multifunctional, being markedly hypotensive (via neuropeptide Y and/ or enkephalins), weakly neurotoxic (unknown components, possibly PLA2s), and perhaps also pro-inflammatory (PLA2s and/or enkephalins). The pronounced hypotensive effects induced by venom peptides seem highly likely to affect the coordination and/or swim performance of envenomed fishes and therefore likely confer a fitness advantage to the fangblenny by facilitating escape from predators.</text>
</comment>
<comment type="similarity">
    <text evidence="5">Belongs to the NPY family.</text>
</comment>
<reference key="1">
    <citation type="journal article" date="2017" name="Curr. Biol.">
        <title>The evolution of fangs, venom, and mimicry systems in blenny fishes.</title>
        <authorList>
            <person name="Casewell N.R."/>
            <person name="Visser J.C."/>
            <person name="Baumann K."/>
            <person name="Dobson J."/>
            <person name="Han H."/>
            <person name="Kuruppu S."/>
            <person name="Morgan M."/>
            <person name="Romilio A."/>
            <person name="Weisbecker V."/>
            <person name="Ali S.A."/>
            <person name="Debono J."/>
            <person name="Koludarov I."/>
            <person name="Que I."/>
            <person name="Bird G.C."/>
            <person name="Cooke G.M."/>
            <person name="Nouwens A."/>
            <person name="Hodgson W.C."/>
            <person name="Wagstaff S.C."/>
            <person name="Cheney K.L."/>
            <person name="Vetter I."/>
            <person name="van der Weerd L."/>
            <person name="Richardson M.K."/>
            <person name="Fry B.G."/>
        </authorList>
    </citation>
    <scope>NUCLEOTIDE SEQUENCE [MRNA]</scope>
    <scope>TISSUE SPECIFICITY</scope>
    <source>
        <tissue>Venom gland</tissue>
    </source>
</reference>
<sequence length="99" mass="11340">MHPNYVSWLGAVGFLLWALLCLGAWTEAYPVKPENPGEDAPAEELAKYYSALRHYINLITRQRYGKRSTPEILDTLVSELLLKETSDTLPQSRYDPSLW</sequence>
<keyword id="KW-0027">Amidation</keyword>
<keyword id="KW-0165">Cleavage on pair of basic residues</keyword>
<keyword id="KW-0382">Hypotensive agent</keyword>
<keyword id="KW-0527">Neuropeptide</keyword>
<keyword id="KW-0964">Secreted</keyword>
<keyword id="KW-0732">Signal</keyword>
<protein>
    <recommendedName>
        <fullName>Pro-neuropeptide Y</fullName>
    </recommendedName>
    <component>
        <recommendedName>
            <fullName evidence="4">Neuropeptide Y</fullName>
            <shortName>NPY</shortName>
        </recommendedName>
    </component>
    <component>
        <recommendedName>
            <fullName evidence="5">C-flanking peptide of NPY</fullName>
        </recommendedName>
    </component>
</protein>
<name>NPYV_MEIAT</name>
<proteinExistence type="evidence at transcript level"/>
<feature type="signal peptide" evidence="2">
    <location>
        <begin position="1"/>
        <end position="28"/>
    </location>
</feature>
<feature type="peptide" id="PRO_0000440265" description="Neuropeptide Y" evidence="1">
    <location>
        <begin position="29"/>
        <end position="64"/>
    </location>
</feature>
<feature type="peptide" id="PRO_0000440266" description="C-flanking peptide of NPY">
    <location>
        <begin position="68"/>
        <end position="99"/>
    </location>
</feature>
<feature type="modified residue" description="Tyrosine amide" evidence="1">
    <location>
        <position position="64"/>
    </location>
</feature>
<accession>P0DP55</accession>
<evidence type="ECO:0000250" key="1">
    <source>
        <dbReference type="UniProtKB" id="P01304"/>
    </source>
</evidence>
<evidence type="ECO:0000255" key="2"/>
<evidence type="ECO:0000269" key="3">
    <source>
    </source>
</evidence>
<evidence type="ECO:0000303" key="4">
    <source>
    </source>
</evidence>
<evidence type="ECO:0000305" key="5"/>
<evidence type="ECO:0000305" key="6">
    <source>
    </source>
</evidence>